<accession>Q9LUS5</accession>
<feature type="chain" id="PRO_0000283416" description="Putative F-box protein At3g16590">
    <location>
        <begin position="1"/>
        <end position="374"/>
    </location>
</feature>
<feature type="domain" description="F-box" evidence="1">
    <location>
        <begin position="1"/>
        <end position="45"/>
    </location>
</feature>
<sequence>MPTKLPLELEDEILLRVPPLSLTRFRTVCKRWNTLFNDQRFINNHLACVRPQFILRTEKDSKIYSIGINIDDSLEVRELNLETQGPNKKLKVYRNLFYCDGFLLCPALLDEVAVWNPWLRKQTKWIEPKRSRFNLYGLGYDNRRPEKCYKILGFGYGYSSEINGSYNRINPRVSVFEFETNAWKDLKFGLFDWHLRSPRTVLSLNGTLYWIAVRCESGGDGFIQSFDFSREMFEPFCLLPCKNDFGDTQILEVFRGDRLSVLEQCPTTNKIKIWVTKNKISGDRKELVSWRLLMTVSIPNFPRLQDLYSNSQPSYFMDNNDDKRLIVCTCDESGKPCIYIVKGDRFKKIQMGFEVEPWPFHLVYVPSLVPIPLA</sequence>
<evidence type="ECO:0000255" key="1">
    <source>
        <dbReference type="PROSITE-ProRule" id="PRU00080"/>
    </source>
</evidence>
<gene>
    <name type="ordered locus">At3g16590</name>
    <name type="ORF">MGL6.5</name>
</gene>
<protein>
    <recommendedName>
        <fullName>Putative F-box protein At3g16590</fullName>
    </recommendedName>
</protein>
<proteinExistence type="predicted"/>
<name>FB146_ARATH</name>
<reference key="1">
    <citation type="journal article" date="2000" name="DNA Res.">
        <title>Structural analysis of Arabidopsis thaliana chromosome 3. I. Sequence features of the regions of 4,504,864 bp covered by sixty P1 and TAC clones.</title>
        <authorList>
            <person name="Sato S."/>
            <person name="Nakamura Y."/>
            <person name="Kaneko T."/>
            <person name="Katoh T."/>
            <person name="Asamizu E."/>
            <person name="Tabata S."/>
        </authorList>
    </citation>
    <scope>NUCLEOTIDE SEQUENCE [LARGE SCALE GENOMIC DNA]</scope>
    <source>
        <strain>cv. Columbia</strain>
    </source>
</reference>
<reference key="2">
    <citation type="journal article" date="2017" name="Plant J.">
        <title>Araport11: a complete reannotation of the Arabidopsis thaliana reference genome.</title>
        <authorList>
            <person name="Cheng C.Y."/>
            <person name="Krishnakumar V."/>
            <person name="Chan A.P."/>
            <person name="Thibaud-Nissen F."/>
            <person name="Schobel S."/>
            <person name="Town C.D."/>
        </authorList>
    </citation>
    <scope>GENOME REANNOTATION</scope>
    <source>
        <strain>cv. Columbia</strain>
    </source>
</reference>
<dbReference type="EMBL" id="AB022217">
    <property type="protein sequence ID" value="BAB02750.1"/>
    <property type="molecule type" value="Genomic_DNA"/>
</dbReference>
<dbReference type="EMBL" id="CP002686">
    <property type="protein sequence ID" value="AEE75841.1"/>
    <property type="molecule type" value="Genomic_DNA"/>
</dbReference>
<dbReference type="RefSeq" id="NP_188281.1">
    <property type="nucleotide sequence ID" value="NM_112532.1"/>
</dbReference>
<dbReference type="FunCoup" id="Q9LUS5">
    <property type="interactions" value="2"/>
</dbReference>
<dbReference type="PaxDb" id="3702-AT3G16590.1"/>
<dbReference type="ProteomicsDB" id="222459"/>
<dbReference type="EnsemblPlants" id="AT3G16590.1">
    <property type="protein sequence ID" value="AT3G16590.1"/>
    <property type="gene ID" value="AT3G16590"/>
</dbReference>
<dbReference type="GeneID" id="820910"/>
<dbReference type="Gramene" id="AT3G16590.1">
    <property type="protein sequence ID" value="AT3G16590.1"/>
    <property type="gene ID" value="AT3G16590"/>
</dbReference>
<dbReference type="KEGG" id="ath:AT3G16590"/>
<dbReference type="Araport" id="AT3G16590"/>
<dbReference type="TAIR" id="AT3G16590"/>
<dbReference type="HOGENOM" id="CLU_034692_2_1_1"/>
<dbReference type="InParanoid" id="Q9LUS5"/>
<dbReference type="OMA" id="NDQRFIN"/>
<dbReference type="PhylomeDB" id="Q9LUS5"/>
<dbReference type="PRO" id="PR:Q9LUS5"/>
<dbReference type="Proteomes" id="UP000006548">
    <property type="component" value="Chromosome 3"/>
</dbReference>
<dbReference type="ExpressionAtlas" id="Q9LUS5">
    <property type="expression patterns" value="baseline and differential"/>
</dbReference>
<dbReference type="CDD" id="cd22157">
    <property type="entry name" value="F-box_AtFBW1-like"/>
    <property type="match status" value="1"/>
</dbReference>
<dbReference type="Gene3D" id="1.20.1280.50">
    <property type="match status" value="1"/>
</dbReference>
<dbReference type="InterPro" id="IPR006527">
    <property type="entry name" value="F-box-assoc_dom_typ1"/>
</dbReference>
<dbReference type="InterPro" id="IPR017451">
    <property type="entry name" value="F-box-assoc_interact_dom"/>
</dbReference>
<dbReference type="InterPro" id="IPR036047">
    <property type="entry name" value="F-box-like_dom_sf"/>
</dbReference>
<dbReference type="InterPro" id="IPR001810">
    <property type="entry name" value="F-box_dom"/>
</dbReference>
<dbReference type="InterPro" id="IPR050796">
    <property type="entry name" value="SCF_F-box_component"/>
</dbReference>
<dbReference type="NCBIfam" id="TIGR01640">
    <property type="entry name" value="F_box_assoc_1"/>
    <property type="match status" value="1"/>
</dbReference>
<dbReference type="PANTHER" id="PTHR31672">
    <property type="entry name" value="BNACNNG10540D PROTEIN"/>
    <property type="match status" value="1"/>
</dbReference>
<dbReference type="PANTHER" id="PTHR31672:SF13">
    <property type="entry name" value="F-BOX PROTEIN CPR30-LIKE"/>
    <property type="match status" value="1"/>
</dbReference>
<dbReference type="Pfam" id="PF00646">
    <property type="entry name" value="F-box"/>
    <property type="match status" value="1"/>
</dbReference>
<dbReference type="Pfam" id="PF07734">
    <property type="entry name" value="FBA_1"/>
    <property type="match status" value="1"/>
</dbReference>
<dbReference type="SMART" id="SM00256">
    <property type="entry name" value="FBOX"/>
    <property type="match status" value="1"/>
</dbReference>
<dbReference type="SUPFAM" id="SSF81383">
    <property type="entry name" value="F-box domain"/>
    <property type="match status" value="1"/>
</dbReference>
<dbReference type="PROSITE" id="PS50181">
    <property type="entry name" value="FBOX"/>
    <property type="match status" value="1"/>
</dbReference>
<organism>
    <name type="scientific">Arabidopsis thaliana</name>
    <name type="common">Mouse-ear cress</name>
    <dbReference type="NCBI Taxonomy" id="3702"/>
    <lineage>
        <taxon>Eukaryota</taxon>
        <taxon>Viridiplantae</taxon>
        <taxon>Streptophyta</taxon>
        <taxon>Embryophyta</taxon>
        <taxon>Tracheophyta</taxon>
        <taxon>Spermatophyta</taxon>
        <taxon>Magnoliopsida</taxon>
        <taxon>eudicotyledons</taxon>
        <taxon>Gunneridae</taxon>
        <taxon>Pentapetalae</taxon>
        <taxon>rosids</taxon>
        <taxon>malvids</taxon>
        <taxon>Brassicales</taxon>
        <taxon>Brassicaceae</taxon>
        <taxon>Camelineae</taxon>
        <taxon>Arabidopsis</taxon>
    </lineage>
</organism>
<keyword id="KW-1185">Reference proteome</keyword>